<proteinExistence type="inferred from homology"/>
<dbReference type="EMBL" id="AE000516">
    <property type="status" value="NOT_ANNOTATED_CDS"/>
    <property type="molecule type" value="Genomic_DNA"/>
</dbReference>
<dbReference type="PIR" id="C70798">
    <property type="entry name" value="C70798"/>
</dbReference>
<dbReference type="SMR" id="P9WHX0"/>
<dbReference type="PATRIC" id="fig|83331.31.peg.4138"/>
<dbReference type="Proteomes" id="UP000001020">
    <property type="component" value="Chromosome"/>
</dbReference>
<dbReference type="GO" id="GO:0005886">
    <property type="term" value="C:plasma membrane"/>
    <property type="evidence" value="ECO:0007669"/>
    <property type="project" value="UniProtKB-SubCell"/>
</dbReference>
<dbReference type="GO" id="GO:0052572">
    <property type="term" value="P:response to host immune response"/>
    <property type="evidence" value="ECO:0007669"/>
    <property type="project" value="TreeGrafter"/>
</dbReference>
<dbReference type="Gene3D" id="1.20.1260.20">
    <property type="entry name" value="PPE superfamily"/>
    <property type="match status" value="1"/>
</dbReference>
<dbReference type="InterPro" id="IPR043641">
    <property type="entry name" value="PPE-PPW_C"/>
</dbReference>
<dbReference type="InterPro" id="IPR000030">
    <property type="entry name" value="PPE_dom"/>
</dbReference>
<dbReference type="InterPro" id="IPR038332">
    <property type="entry name" value="PPE_sf"/>
</dbReference>
<dbReference type="PANTHER" id="PTHR46766">
    <property type="entry name" value="GLUTAMINE-RICH PROTEIN 2"/>
    <property type="match status" value="1"/>
</dbReference>
<dbReference type="PANTHER" id="PTHR46766:SF1">
    <property type="entry name" value="GLUTAMINE-RICH PROTEIN 2"/>
    <property type="match status" value="1"/>
</dbReference>
<dbReference type="Pfam" id="PF00823">
    <property type="entry name" value="PPE"/>
    <property type="match status" value="1"/>
</dbReference>
<dbReference type="Pfam" id="PF18878">
    <property type="entry name" value="PPE-PPW"/>
    <property type="match status" value="1"/>
</dbReference>
<dbReference type="SUPFAM" id="SSF140459">
    <property type="entry name" value="PE/PPE dimer-like"/>
    <property type="match status" value="1"/>
</dbReference>
<evidence type="ECO:0000255" key="1"/>
<evidence type="ECO:0000305" key="2"/>
<sequence length="315" mass="31436">MTTAYASALAAMPTLTELAANHTSHAVLLGTNFFGINTIPIALNEADYARMWIQAATTMSIYEGTSDAALASAPQTTPAPVLFNGGAGVASALPAISAATLDPASIIGIIIEILIQLFLISLEILFAIVAYTIIIVLILPLVIFAYAIVFAVLAIIFGPPLLVIASPFVLTGSVIAVPTSLSTSLSTAVPIGVGQYLADLASADAQAIEVGLKTADVAPVAVRPAAAPPLRESAAVRPEARLVSAVAPAPAGTSASVLASDRGAGVLGFAGTAGKESVGRPAGLTTLAGGEFGGSPSVPMVPASWEQLVGAGEAG</sequence>
<keyword id="KW-1003">Cell membrane</keyword>
<keyword id="KW-0472">Membrane</keyword>
<keyword id="KW-1185">Reference proteome</keyword>
<keyword id="KW-0812">Transmembrane</keyword>
<keyword id="KW-1133">Transmembrane helix</keyword>
<gene>
    <name type="primary">PPE66</name>
    <name type="ordered locus">MT3844</name>
</gene>
<accession>P9WHX0</accession>
<accession>L0TGL5</accession>
<accession>Q79FA3</accession>
<reference key="1">
    <citation type="journal article" date="2002" name="J. Bacteriol.">
        <title>Whole-genome comparison of Mycobacterium tuberculosis clinical and laboratory strains.</title>
        <authorList>
            <person name="Fleischmann R.D."/>
            <person name="Alland D."/>
            <person name="Eisen J.A."/>
            <person name="Carpenter L."/>
            <person name="White O."/>
            <person name="Peterson J.D."/>
            <person name="DeBoy R.T."/>
            <person name="Dodson R.J."/>
            <person name="Gwinn M.L."/>
            <person name="Haft D.H."/>
            <person name="Hickey E.K."/>
            <person name="Kolonay J.F."/>
            <person name="Nelson W.C."/>
            <person name="Umayam L.A."/>
            <person name="Ermolaeva M.D."/>
            <person name="Salzberg S.L."/>
            <person name="Delcher A."/>
            <person name="Utterback T.R."/>
            <person name="Weidman J.F."/>
            <person name="Khouri H.M."/>
            <person name="Gill J."/>
            <person name="Mikula A."/>
            <person name="Bishai W."/>
            <person name="Jacobs W.R. Jr."/>
            <person name="Venter J.C."/>
            <person name="Fraser C.M."/>
        </authorList>
    </citation>
    <scope>NUCLEOTIDE SEQUENCE [LARGE SCALE GENOMIC DNA]</scope>
    <source>
        <strain>CDC 1551 / Oshkosh</strain>
    </source>
</reference>
<feature type="chain" id="PRO_0000428108" description="Uncharacterized PPE family protein PPE66">
    <location>
        <begin position="1"/>
        <end position="315"/>
    </location>
</feature>
<feature type="transmembrane region" description="Helical" evidence="1">
    <location>
        <begin position="81"/>
        <end position="101"/>
    </location>
</feature>
<feature type="transmembrane region" description="Helical" evidence="1">
    <location>
        <begin position="106"/>
        <end position="126"/>
    </location>
</feature>
<feature type="transmembrane region" description="Helical" evidence="1">
    <location>
        <begin position="133"/>
        <end position="153"/>
    </location>
</feature>
<organism>
    <name type="scientific">Mycobacterium tuberculosis (strain CDC 1551 / Oshkosh)</name>
    <dbReference type="NCBI Taxonomy" id="83331"/>
    <lineage>
        <taxon>Bacteria</taxon>
        <taxon>Bacillati</taxon>
        <taxon>Actinomycetota</taxon>
        <taxon>Actinomycetes</taxon>
        <taxon>Mycobacteriales</taxon>
        <taxon>Mycobacteriaceae</taxon>
        <taxon>Mycobacterium</taxon>
        <taxon>Mycobacterium tuberculosis complex</taxon>
    </lineage>
</organism>
<comment type="subcellular location">
    <subcellularLocation>
        <location evidence="2">Cell membrane</location>
        <topology evidence="2">Multi-pass membrane protein</topology>
    </subcellularLocation>
</comment>
<comment type="similarity">
    <text evidence="2">Belongs to the mycobacterial PPE family.</text>
</comment>
<protein>
    <recommendedName>
        <fullName>Uncharacterized PPE family protein PPE66</fullName>
    </recommendedName>
</protein>
<name>PPE66_MYCTO</name>